<sequence>MPNWGGGKKCGVCQKTVYFAEEVQCEGNSFHKSCFLCMVCKKNLDSTTVAVHGEEIYCKSCYGKKYGPKGYGYGQGAGTLSTDKGESLGIKHEEAPGHRPTTNPNASKFAQKIGGSERCPRCSQAVYAAEKVIGAGKSWHKACFRCAKCGKGLESTTLADKDGEIYCKGCYAKNFGPKGFGFGQGAGALVHSE</sequence>
<feature type="chain" id="PRO_0000075715" description="Cysteine and glycine-rich protein 1">
    <location>
        <begin position="1"/>
        <end position="193"/>
    </location>
</feature>
<feature type="domain" description="LIM zinc-binding 1" evidence="4">
    <location>
        <begin position="10"/>
        <end position="61"/>
    </location>
</feature>
<feature type="domain" description="LIM zinc-binding 2" evidence="4">
    <location>
        <begin position="119"/>
        <end position="170"/>
    </location>
</feature>
<feature type="short sequence motif" description="Nuclear localization signal" evidence="3">
    <location>
        <begin position="64"/>
        <end position="69"/>
    </location>
</feature>
<feature type="modified residue" description="Phosphoserine" evidence="1">
    <location>
        <position position="81"/>
    </location>
</feature>
<feature type="modified residue" description="N6-acetyllysine" evidence="2">
    <location>
        <position position="84"/>
    </location>
</feature>
<feature type="modified residue" description="N6-acetyllysine" evidence="10">
    <location>
        <position position="112"/>
    </location>
</feature>
<feature type="modified residue" description="N6-acetyllysine" evidence="10">
    <location>
        <position position="131"/>
    </location>
</feature>
<feature type="modified residue" description="N6-acetyllysine" evidence="2">
    <location>
        <position position="137"/>
    </location>
</feature>
<feature type="modified residue" description="N6-acetyllysine" evidence="2">
    <location>
        <position position="161"/>
    </location>
</feature>
<feature type="modified residue" description="Phosphoserine" evidence="7 8 9 11 12 13 14 15">
    <location>
        <position position="192"/>
    </location>
</feature>
<feature type="cross-link" description="Glycyl lysine isopeptide (Lys-Gly) (interchain with G-Cter in SUMO2)" evidence="16">
    <location>
        <position position="91"/>
    </location>
</feature>
<feature type="sequence variant" id="VAR_050144" description="In dbSNP:rs3738283.">
    <original>K</original>
    <variation>I</variation>
    <location>
        <position position="108"/>
    </location>
</feature>
<feature type="sequence conflict" description="In Ref. 4; BAF82822." evidence="6" ref="4">
    <original>K</original>
    <variation>R</variation>
    <location>
        <position position="91"/>
    </location>
</feature>
<organism>
    <name type="scientific">Homo sapiens</name>
    <name type="common">Human</name>
    <dbReference type="NCBI Taxonomy" id="9606"/>
    <lineage>
        <taxon>Eukaryota</taxon>
        <taxon>Metazoa</taxon>
        <taxon>Chordata</taxon>
        <taxon>Craniata</taxon>
        <taxon>Vertebrata</taxon>
        <taxon>Euteleostomi</taxon>
        <taxon>Mammalia</taxon>
        <taxon>Eutheria</taxon>
        <taxon>Euarchontoglires</taxon>
        <taxon>Primates</taxon>
        <taxon>Haplorrhini</taxon>
        <taxon>Catarrhini</taxon>
        <taxon>Hominidae</taxon>
        <taxon>Homo</taxon>
    </lineage>
</organism>
<name>CSRP1_HUMAN</name>
<comment type="function">
    <text>Could play a role in neuronal development.</text>
</comment>
<comment type="subunit">
    <text evidence="5">Interacts with ASCC1; ASCC2 and TRIP4.</text>
</comment>
<comment type="interaction">
    <interactant intactId="EBI-3959636">
        <id>P21291</id>
    </interactant>
    <interactant intactId="EBI-12259996">
        <id>Q16790</id>
        <label>CA9</label>
    </interactant>
    <organismsDiffer>false</organismsDiffer>
    <experiments>3</experiments>
</comment>
<comment type="interaction">
    <interactant intactId="EBI-3959636">
        <id>P21291</id>
    </interactant>
    <interactant intactId="EBI-1644241">
        <id>Q9H902</id>
        <label>REEP1</label>
    </interactant>
    <organismsDiffer>false</organismsDiffer>
    <experiments>3</experiments>
</comment>
<comment type="subcellular location">
    <subcellularLocation>
        <location evidence="5">Nucleus</location>
    </subcellularLocation>
</comment>
<reference key="1">
    <citation type="journal article" date="1990" name="Nucleic Acids Res.">
        <title>Characterization of a human cDNA encoding a widely expressed and highly conserved cysteine-rich protein with an unusual zinc-finger motif.</title>
        <authorList>
            <person name="Liebhaber S.A."/>
            <person name="Emery J.G."/>
            <person name="Urbanek M."/>
            <person name="Wang X."/>
            <person name="Cooke N.E."/>
        </authorList>
    </citation>
    <scope>NUCLEOTIDE SEQUENCE [MRNA]</scope>
    <source>
        <tissue>Term placenta</tissue>
    </source>
</reference>
<reference key="2">
    <citation type="journal article" date="1992" name="J. Biol. Chem.">
        <title>Human cysteine-rich protein. A member of the LIM/double-finger family displaying coordinate serum induction with c-myc.</title>
        <authorList>
            <person name="Wang X."/>
            <person name="Lee G."/>
            <person name="Liebhaber S.A."/>
            <person name="Cooke N.E."/>
        </authorList>
    </citation>
    <scope>NUCLEOTIDE SEQUENCE [GENOMIC DNA]</scope>
</reference>
<reference key="3">
    <citation type="submission" date="2014-01" db="EMBL/GenBank/DDBJ databases">
        <authorList>
            <person name="Li J.Y."/>
            <person name="Wang H.Y."/>
            <person name="Liu F.J."/>
            <person name="Liu J."/>
        </authorList>
    </citation>
    <scope>NUCLEOTIDE SEQUENCE [MRNA]</scope>
</reference>
<reference key="4">
    <citation type="journal article" date="2004" name="Nat. Genet.">
        <title>Complete sequencing and characterization of 21,243 full-length human cDNAs.</title>
        <authorList>
            <person name="Ota T."/>
            <person name="Suzuki Y."/>
            <person name="Nishikawa T."/>
            <person name="Otsuki T."/>
            <person name="Sugiyama T."/>
            <person name="Irie R."/>
            <person name="Wakamatsu A."/>
            <person name="Hayashi K."/>
            <person name="Sato H."/>
            <person name="Nagai K."/>
            <person name="Kimura K."/>
            <person name="Makita H."/>
            <person name="Sekine M."/>
            <person name="Obayashi M."/>
            <person name="Nishi T."/>
            <person name="Shibahara T."/>
            <person name="Tanaka T."/>
            <person name="Ishii S."/>
            <person name="Yamamoto J."/>
            <person name="Saito K."/>
            <person name="Kawai Y."/>
            <person name="Isono Y."/>
            <person name="Nakamura Y."/>
            <person name="Nagahari K."/>
            <person name="Murakami K."/>
            <person name="Yasuda T."/>
            <person name="Iwayanagi T."/>
            <person name="Wagatsuma M."/>
            <person name="Shiratori A."/>
            <person name="Sudo H."/>
            <person name="Hosoiri T."/>
            <person name="Kaku Y."/>
            <person name="Kodaira H."/>
            <person name="Kondo H."/>
            <person name="Sugawara M."/>
            <person name="Takahashi M."/>
            <person name="Kanda K."/>
            <person name="Yokoi T."/>
            <person name="Furuya T."/>
            <person name="Kikkawa E."/>
            <person name="Omura Y."/>
            <person name="Abe K."/>
            <person name="Kamihara K."/>
            <person name="Katsuta N."/>
            <person name="Sato K."/>
            <person name="Tanikawa M."/>
            <person name="Yamazaki M."/>
            <person name="Ninomiya K."/>
            <person name="Ishibashi T."/>
            <person name="Yamashita H."/>
            <person name="Murakawa K."/>
            <person name="Fujimori K."/>
            <person name="Tanai H."/>
            <person name="Kimata M."/>
            <person name="Watanabe M."/>
            <person name="Hiraoka S."/>
            <person name="Chiba Y."/>
            <person name="Ishida S."/>
            <person name="Ono Y."/>
            <person name="Takiguchi S."/>
            <person name="Watanabe S."/>
            <person name="Yosida M."/>
            <person name="Hotuta T."/>
            <person name="Kusano J."/>
            <person name="Kanehori K."/>
            <person name="Takahashi-Fujii A."/>
            <person name="Hara H."/>
            <person name="Tanase T.-O."/>
            <person name="Nomura Y."/>
            <person name="Togiya S."/>
            <person name="Komai F."/>
            <person name="Hara R."/>
            <person name="Takeuchi K."/>
            <person name="Arita M."/>
            <person name="Imose N."/>
            <person name="Musashino K."/>
            <person name="Yuuki H."/>
            <person name="Oshima A."/>
            <person name="Sasaki N."/>
            <person name="Aotsuka S."/>
            <person name="Yoshikawa Y."/>
            <person name="Matsunawa H."/>
            <person name="Ichihara T."/>
            <person name="Shiohata N."/>
            <person name="Sano S."/>
            <person name="Moriya S."/>
            <person name="Momiyama H."/>
            <person name="Satoh N."/>
            <person name="Takami S."/>
            <person name="Terashima Y."/>
            <person name="Suzuki O."/>
            <person name="Nakagawa S."/>
            <person name="Senoh A."/>
            <person name="Mizoguchi H."/>
            <person name="Goto Y."/>
            <person name="Shimizu F."/>
            <person name="Wakebe H."/>
            <person name="Hishigaki H."/>
            <person name="Watanabe T."/>
            <person name="Sugiyama A."/>
            <person name="Takemoto M."/>
            <person name="Kawakami B."/>
            <person name="Yamazaki M."/>
            <person name="Watanabe K."/>
            <person name="Kumagai A."/>
            <person name="Itakura S."/>
            <person name="Fukuzumi Y."/>
            <person name="Fujimori Y."/>
            <person name="Komiyama M."/>
            <person name="Tashiro H."/>
            <person name="Tanigami A."/>
            <person name="Fujiwara T."/>
            <person name="Ono T."/>
            <person name="Yamada K."/>
            <person name="Fujii Y."/>
            <person name="Ozaki K."/>
            <person name="Hirao M."/>
            <person name="Ohmori Y."/>
            <person name="Kawabata A."/>
            <person name="Hikiji T."/>
            <person name="Kobatake N."/>
            <person name="Inagaki H."/>
            <person name="Ikema Y."/>
            <person name="Okamoto S."/>
            <person name="Okitani R."/>
            <person name="Kawakami T."/>
            <person name="Noguchi S."/>
            <person name="Itoh T."/>
            <person name="Shigeta K."/>
            <person name="Senba T."/>
            <person name="Matsumura K."/>
            <person name="Nakajima Y."/>
            <person name="Mizuno T."/>
            <person name="Morinaga M."/>
            <person name="Sasaki M."/>
            <person name="Togashi T."/>
            <person name="Oyama M."/>
            <person name="Hata H."/>
            <person name="Watanabe M."/>
            <person name="Komatsu T."/>
            <person name="Mizushima-Sugano J."/>
            <person name="Satoh T."/>
            <person name="Shirai Y."/>
            <person name="Takahashi Y."/>
            <person name="Nakagawa K."/>
            <person name="Okumura K."/>
            <person name="Nagase T."/>
            <person name="Nomura N."/>
            <person name="Kikuchi H."/>
            <person name="Masuho Y."/>
            <person name="Yamashita R."/>
            <person name="Nakai K."/>
            <person name="Yada T."/>
            <person name="Nakamura Y."/>
            <person name="Ohara O."/>
            <person name="Isogai T."/>
            <person name="Sugano S."/>
        </authorList>
    </citation>
    <scope>NUCLEOTIDE SEQUENCE [LARGE SCALE MRNA]</scope>
    <source>
        <tissue>Thalamus</tissue>
        <tissue>Uterus</tissue>
    </source>
</reference>
<reference key="5">
    <citation type="submission" date="2004-10" db="EMBL/GenBank/DDBJ databases">
        <title>Cloning of human full-length CDSs in BD Creator(TM) system donor vector.</title>
        <authorList>
            <person name="Kalnine N."/>
            <person name="Chen X."/>
            <person name="Rolfs A."/>
            <person name="Halleck A."/>
            <person name="Hines L."/>
            <person name="Eisenstein S."/>
            <person name="Koundinya M."/>
            <person name="Raphael J."/>
            <person name="Moreira D."/>
            <person name="Kelley T."/>
            <person name="LaBaer J."/>
            <person name="Lin Y."/>
            <person name="Phelan M."/>
            <person name="Farmer A."/>
        </authorList>
    </citation>
    <scope>NUCLEOTIDE SEQUENCE [LARGE SCALE MRNA]</scope>
</reference>
<reference key="6">
    <citation type="submission" date="2005-07" db="EMBL/GenBank/DDBJ databases">
        <authorList>
            <person name="Mural R.J."/>
            <person name="Istrail S."/>
            <person name="Sutton G."/>
            <person name="Florea L."/>
            <person name="Halpern A.L."/>
            <person name="Mobarry C.M."/>
            <person name="Lippert R."/>
            <person name="Walenz B."/>
            <person name="Shatkay H."/>
            <person name="Dew I."/>
            <person name="Miller J.R."/>
            <person name="Flanigan M.J."/>
            <person name="Edwards N.J."/>
            <person name="Bolanos R."/>
            <person name="Fasulo D."/>
            <person name="Halldorsson B.V."/>
            <person name="Hannenhalli S."/>
            <person name="Turner R."/>
            <person name="Yooseph S."/>
            <person name="Lu F."/>
            <person name="Nusskern D.R."/>
            <person name="Shue B.C."/>
            <person name="Zheng X.H."/>
            <person name="Zhong F."/>
            <person name="Delcher A.L."/>
            <person name="Huson D.H."/>
            <person name="Kravitz S.A."/>
            <person name="Mouchard L."/>
            <person name="Reinert K."/>
            <person name="Remington K.A."/>
            <person name="Clark A.G."/>
            <person name="Waterman M.S."/>
            <person name="Eichler E.E."/>
            <person name="Adams M.D."/>
            <person name="Hunkapiller M.W."/>
            <person name="Myers E.W."/>
            <person name="Venter J.C."/>
        </authorList>
    </citation>
    <scope>NUCLEOTIDE SEQUENCE [LARGE SCALE GENOMIC DNA]</scope>
</reference>
<reference key="7">
    <citation type="journal article" date="2004" name="Genome Res.">
        <title>The status, quality, and expansion of the NIH full-length cDNA project: the Mammalian Gene Collection (MGC).</title>
        <authorList>
            <consortium name="The MGC Project Team"/>
        </authorList>
    </citation>
    <scope>NUCLEOTIDE SEQUENCE [LARGE SCALE MRNA]</scope>
    <source>
        <tissue>Brain</tissue>
    </source>
</reference>
<reference key="8">
    <citation type="journal article" date="2006" name="Cell">
        <title>Global, in vivo, and site-specific phosphorylation dynamics in signaling networks.</title>
        <authorList>
            <person name="Olsen J.V."/>
            <person name="Blagoev B."/>
            <person name="Gnad F."/>
            <person name="Macek B."/>
            <person name="Kumar C."/>
            <person name="Mortensen P."/>
            <person name="Mann M."/>
        </authorList>
    </citation>
    <scope>PHOSPHORYLATION [LARGE SCALE ANALYSIS] AT SER-192</scope>
    <scope>IDENTIFICATION BY MASS SPECTROMETRY [LARGE SCALE ANALYSIS]</scope>
    <source>
        <tissue>Cervix carcinoma</tissue>
    </source>
</reference>
<reference key="9">
    <citation type="journal article" date="2006" name="Nat. Biotechnol.">
        <title>A probability-based approach for high-throughput protein phosphorylation analysis and site localization.</title>
        <authorList>
            <person name="Beausoleil S.A."/>
            <person name="Villen J."/>
            <person name="Gerber S.A."/>
            <person name="Rush J."/>
            <person name="Gygi S.P."/>
        </authorList>
    </citation>
    <scope>PHOSPHORYLATION [LARGE SCALE ANALYSIS] AT SER-192</scope>
    <scope>IDENTIFICATION BY MASS SPECTROMETRY [LARGE SCALE ANALYSIS]</scope>
    <source>
        <tissue>Cervix carcinoma</tissue>
    </source>
</reference>
<reference key="10">
    <citation type="journal article" date="2008" name="J. Proteome Res.">
        <title>Combining protein-based IMAC, peptide-based IMAC, and MudPIT for efficient phosphoproteomic analysis.</title>
        <authorList>
            <person name="Cantin G.T."/>
            <person name="Yi W."/>
            <person name="Lu B."/>
            <person name="Park S.K."/>
            <person name="Xu T."/>
            <person name="Lee J.-D."/>
            <person name="Yates J.R. III"/>
        </authorList>
    </citation>
    <scope>PHOSPHORYLATION [LARGE SCALE ANALYSIS] AT SER-192</scope>
    <scope>IDENTIFICATION BY MASS SPECTROMETRY [LARGE SCALE ANALYSIS]</scope>
    <source>
        <tissue>Cervix carcinoma</tissue>
    </source>
</reference>
<reference key="11">
    <citation type="journal article" date="2008" name="Proc. Natl. Acad. Sci. U.S.A.">
        <title>A quantitative atlas of mitotic phosphorylation.</title>
        <authorList>
            <person name="Dephoure N."/>
            <person name="Zhou C."/>
            <person name="Villen J."/>
            <person name="Beausoleil S.A."/>
            <person name="Bakalarski C.E."/>
            <person name="Elledge S.J."/>
            <person name="Gygi S.P."/>
        </authorList>
    </citation>
    <scope>IDENTIFICATION BY MASS SPECTROMETRY [LARGE SCALE ANALYSIS]</scope>
    <source>
        <tissue>Cervix carcinoma</tissue>
    </source>
</reference>
<reference key="12">
    <citation type="journal article" date="2009" name="Sci. Signal.">
        <title>Quantitative phosphoproteomic analysis of T cell receptor signaling reveals system-wide modulation of protein-protein interactions.</title>
        <authorList>
            <person name="Mayya V."/>
            <person name="Lundgren D.H."/>
            <person name="Hwang S.-I."/>
            <person name="Rezaul K."/>
            <person name="Wu L."/>
            <person name="Eng J.K."/>
            <person name="Rodionov V."/>
            <person name="Han D.K."/>
        </authorList>
    </citation>
    <scope>PHOSPHORYLATION [LARGE SCALE ANALYSIS] AT SER-192</scope>
    <scope>IDENTIFICATION BY MASS SPECTROMETRY [LARGE SCALE ANALYSIS]</scope>
    <source>
        <tissue>Leukemic T-cell</tissue>
    </source>
</reference>
<reference key="13">
    <citation type="journal article" date="2009" name="Science">
        <title>Lysine acetylation targets protein complexes and co-regulates major cellular functions.</title>
        <authorList>
            <person name="Choudhary C."/>
            <person name="Kumar C."/>
            <person name="Gnad F."/>
            <person name="Nielsen M.L."/>
            <person name="Rehman M."/>
            <person name="Walther T.C."/>
            <person name="Olsen J.V."/>
            <person name="Mann M."/>
        </authorList>
    </citation>
    <scope>ACETYLATION [LARGE SCALE ANALYSIS] AT LYS-112 AND LYS-131</scope>
    <scope>IDENTIFICATION BY MASS SPECTROMETRY [LARGE SCALE ANALYSIS]</scope>
</reference>
<reference key="14">
    <citation type="journal article" date="2010" name="Sci. Signal.">
        <title>Quantitative phosphoproteomics reveals widespread full phosphorylation site occupancy during mitosis.</title>
        <authorList>
            <person name="Olsen J.V."/>
            <person name="Vermeulen M."/>
            <person name="Santamaria A."/>
            <person name="Kumar C."/>
            <person name="Miller M.L."/>
            <person name="Jensen L.J."/>
            <person name="Gnad F."/>
            <person name="Cox J."/>
            <person name="Jensen T.S."/>
            <person name="Nigg E.A."/>
            <person name="Brunak S."/>
            <person name="Mann M."/>
        </authorList>
    </citation>
    <scope>PHOSPHORYLATION [LARGE SCALE ANALYSIS] AT SER-192</scope>
    <scope>IDENTIFICATION BY MASS SPECTROMETRY [LARGE SCALE ANALYSIS]</scope>
    <source>
        <tissue>Cervix carcinoma</tissue>
    </source>
</reference>
<reference key="15">
    <citation type="journal article" date="2011" name="BMC Syst. Biol.">
        <title>Initial characterization of the human central proteome.</title>
        <authorList>
            <person name="Burkard T.R."/>
            <person name="Planyavsky M."/>
            <person name="Kaupe I."/>
            <person name="Breitwieser F.P."/>
            <person name="Buerckstuemmer T."/>
            <person name="Bennett K.L."/>
            <person name="Superti-Furga G."/>
            <person name="Colinge J."/>
        </authorList>
    </citation>
    <scope>IDENTIFICATION BY MASS SPECTROMETRY [LARGE SCALE ANALYSIS]</scope>
</reference>
<reference key="16">
    <citation type="journal article" date="2011" name="Sci. Signal.">
        <title>System-wide temporal characterization of the proteome and phosphoproteome of human embryonic stem cell differentiation.</title>
        <authorList>
            <person name="Rigbolt K.T."/>
            <person name="Prokhorova T.A."/>
            <person name="Akimov V."/>
            <person name="Henningsen J."/>
            <person name="Johansen P.T."/>
            <person name="Kratchmarova I."/>
            <person name="Kassem M."/>
            <person name="Mann M."/>
            <person name="Olsen J.V."/>
            <person name="Blagoev B."/>
        </authorList>
    </citation>
    <scope>PHOSPHORYLATION [LARGE SCALE ANALYSIS] AT SER-192</scope>
    <scope>IDENTIFICATION BY MASS SPECTROMETRY [LARGE SCALE ANALYSIS]</scope>
</reference>
<reference key="17">
    <citation type="journal article" date="2013" name="J. Proteome Res.">
        <title>Toward a comprehensive characterization of a human cancer cell phosphoproteome.</title>
        <authorList>
            <person name="Zhou H."/>
            <person name="Di Palma S."/>
            <person name="Preisinger C."/>
            <person name="Peng M."/>
            <person name="Polat A.N."/>
            <person name="Heck A.J."/>
            <person name="Mohammed S."/>
        </authorList>
    </citation>
    <scope>PHOSPHORYLATION [LARGE SCALE ANALYSIS] AT SER-192</scope>
    <scope>IDENTIFICATION BY MASS SPECTROMETRY [LARGE SCALE ANALYSIS]</scope>
    <source>
        <tissue>Cervix carcinoma</tissue>
        <tissue>Erythroleukemia</tissue>
    </source>
</reference>
<reference key="18">
    <citation type="journal article" date="2014" name="J. Proteomics">
        <title>An enzyme assisted RP-RPLC approach for in-depth analysis of human liver phosphoproteome.</title>
        <authorList>
            <person name="Bian Y."/>
            <person name="Song C."/>
            <person name="Cheng K."/>
            <person name="Dong M."/>
            <person name="Wang F."/>
            <person name="Huang J."/>
            <person name="Sun D."/>
            <person name="Wang L."/>
            <person name="Ye M."/>
            <person name="Zou H."/>
        </authorList>
    </citation>
    <scope>PHOSPHORYLATION [LARGE SCALE ANALYSIS] AT SER-192</scope>
    <scope>IDENTIFICATION BY MASS SPECTROMETRY [LARGE SCALE ANALYSIS]</scope>
    <source>
        <tissue>Liver</tissue>
    </source>
</reference>
<reference key="19">
    <citation type="journal article" date="2015" name="Proteomics">
        <title>N-terminome analysis of the human mitochondrial proteome.</title>
        <authorList>
            <person name="Vaca Jacome A.S."/>
            <person name="Rabilloud T."/>
            <person name="Schaeffer-Reiss C."/>
            <person name="Rompais M."/>
            <person name="Ayoub D."/>
            <person name="Lane L."/>
            <person name="Bairoch A."/>
            <person name="Van Dorsselaer A."/>
            <person name="Carapito C."/>
        </authorList>
    </citation>
    <scope>IDENTIFICATION BY MASS SPECTROMETRY [LARGE SCALE ANALYSIS]</scope>
</reference>
<reference key="20">
    <citation type="journal article" date="2016" name="Am. J. Hum. Genet.">
        <title>Mutations in subunits of the activating signal cointegrator 1 complex are associated with prenatal spinal muscular atrophy and congenital bone fractures.</title>
        <authorList>
            <person name="Knierim E."/>
            <person name="Hirata H."/>
            <person name="Wolf N.I."/>
            <person name="Morales-Gonzalez S."/>
            <person name="Schottmann G."/>
            <person name="Tanaka Y."/>
            <person name="Rudnik-Schoeneborn S."/>
            <person name="Orgeur M."/>
            <person name="Zerres K."/>
            <person name="Vogt S."/>
            <person name="van Riesen A."/>
            <person name="Gill E."/>
            <person name="Seifert F."/>
            <person name="Zwirner A."/>
            <person name="Kirschner J."/>
            <person name="Goebel H.H."/>
            <person name="Huebner C."/>
            <person name="Stricker S."/>
            <person name="Meierhofer D."/>
            <person name="Stenzel W."/>
            <person name="Schuelke M."/>
        </authorList>
    </citation>
    <scope>INTERACTION WITH ASCC1; ASCC2 AND TRIP4</scope>
    <scope>SUBCELLULAR LOCATION</scope>
</reference>
<reference key="21">
    <citation type="journal article" date="2017" name="Nat. Struct. Mol. Biol.">
        <title>Site-specific mapping of the human SUMO proteome reveals co-modification with phosphorylation.</title>
        <authorList>
            <person name="Hendriks I.A."/>
            <person name="Lyon D."/>
            <person name="Young C."/>
            <person name="Jensen L.J."/>
            <person name="Vertegaal A.C."/>
            <person name="Nielsen M.L."/>
        </authorList>
    </citation>
    <scope>SUMOYLATION [LARGE SCALE ANALYSIS] AT LYS-91</scope>
    <scope>IDENTIFICATION BY MASS SPECTROMETRY [LARGE SCALE ANALYSIS]</scope>
</reference>
<protein>
    <recommendedName>
        <fullName>Cysteine and glycine-rich protein 1</fullName>
    </recommendedName>
    <alternativeName>
        <fullName>Cysteine-rich protein 1</fullName>
        <shortName>CRP</shortName>
        <shortName>CRP1</shortName>
    </alternativeName>
    <alternativeName>
        <fullName>Epididymis luminal protein 141</fullName>
        <shortName>HEL-141</shortName>
    </alternativeName>
</protein>
<keyword id="KW-0007">Acetylation</keyword>
<keyword id="KW-1017">Isopeptide bond</keyword>
<keyword id="KW-0440">LIM domain</keyword>
<keyword id="KW-0479">Metal-binding</keyword>
<keyword id="KW-0539">Nucleus</keyword>
<keyword id="KW-0597">Phosphoprotein</keyword>
<keyword id="KW-1267">Proteomics identification</keyword>
<keyword id="KW-1185">Reference proteome</keyword>
<keyword id="KW-0677">Repeat</keyword>
<keyword id="KW-0832">Ubl conjugation</keyword>
<keyword id="KW-0862">Zinc</keyword>
<dbReference type="EMBL" id="M33146">
    <property type="protein sequence ID" value="AAA35720.1"/>
    <property type="molecule type" value="mRNA"/>
</dbReference>
<dbReference type="EMBL" id="M76378">
    <property type="protein sequence ID" value="AAA58431.1"/>
    <property type="molecule type" value="Genomic_DNA"/>
</dbReference>
<dbReference type="EMBL" id="M76376">
    <property type="protein sequence ID" value="AAA58431.1"/>
    <property type="status" value="JOINED"/>
    <property type="molecule type" value="Genomic_DNA"/>
</dbReference>
<dbReference type="EMBL" id="M76377">
    <property type="protein sequence ID" value="AAA58431.1"/>
    <property type="status" value="JOINED"/>
    <property type="molecule type" value="Genomic_DNA"/>
</dbReference>
<dbReference type="EMBL" id="EU668320">
    <property type="protein sequence ID" value="ACF94473.1"/>
    <property type="molecule type" value="mRNA"/>
</dbReference>
<dbReference type="EMBL" id="AK290133">
    <property type="protein sequence ID" value="BAF82822.1"/>
    <property type="molecule type" value="mRNA"/>
</dbReference>
<dbReference type="EMBL" id="AK293053">
    <property type="protein sequence ID" value="BAF85742.1"/>
    <property type="molecule type" value="mRNA"/>
</dbReference>
<dbReference type="EMBL" id="BT019520">
    <property type="protein sequence ID" value="AAV38327.1"/>
    <property type="molecule type" value="mRNA"/>
</dbReference>
<dbReference type="EMBL" id="CH471067">
    <property type="protein sequence ID" value="EAW91371.1"/>
    <property type="molecule type" value="Genomic_DNA"/>
</dbReference>
<dbReference type="EMBL" id="BC032493">
    <property type="protein sequence ID" value="AAH32493.1"/>
    <property type="molecule type" value="mRNA"/>
</dbReference>
<dbReference type="CCDS" id="CCDS1413.1"/>
<dbReference type="PIR" id="S12658">
    <property type="entry name" value="S12658"/>
</dbReference>
<dbReference type="RefSeq" id="NP_001180499.1">
    <property type="nucleotide sequence ID" value="NM_001193570.1"/>
</dbReference>
<dbReference type="RefSeq" id="NP_001180500.1">
    <property type="nucleotide sequence ID" value="NM_001193571.2"/>
</dbReference>
<dbReference type="RefSeq" id="NP_001180501.1">
    <property type="nucleotide sequence ID" value="NM_001193572.2"/>
</dbReference>
<dbReference type="RefSeq" id="NP_004069.1">
    <property type="nucleotide sequence ID" value="NM_004078.3"/>
</dbReference>
<dbReference type="SMR" id="P21291"/>
<dbReference type="BioGRID" id="107847">
    <property type="interactions" value="72"/>
</dbReference>
<dbReference type="FunCoup" id="P21291">
    <property type="interactions" value="294"/>
</dbReference>
<dbReference type="IntAct" id="P21291">
    <property type="interactions" value="15"/>
</dbReference>
<dbReference type="MINT" id="P21291"/>
<dbReference type="STRING" id="9606.ENSP00000356275"/>
<dbReference type="ChEMBL" id="CHEMBL4295728"/>
<dbReference type="DrugBank" id="DB11638">
    <property type="generic name" value="Artenimol"/>
</dbReference>
<dbReference type="GlyCosmos" id="P21291">
    <property type="glycosylation" value="1 site, 1 glycan"/>
</dbReference>
<dbReference type="GlyGen" id="P21291">
    <property type="glycosylation" value="1 site, 1 O-linked glycan (1 site)"/>
</dbReference>
<dbReference type="iPTMnet" id="P21291"/>
<dbReference type="MetOSite" id="P21291"/>
<dbReference type="PhosphoSitePlus" id="P21291"/>
<dbReference type="SwissPalm" id="P21291"/>
<dbReference type="BioMuta" id="CSRP1"/>
<dbReference type="DMDM" id="118161"/>
<dbReference type="OGP" id="P21291"/>
<dbReference type="jPOST" id="P21291"/>
<dbReference type="MassIVE" id="P21291"/>
<dbReference type="PaxDb" id="9606-ENSP00000356275"/>
<dbReference type="PeptideAtlas" id="P21291"/>
<dbReference type="ProteomicsDB" id="53858"/>
<dbReference type="Pumba" id="P21291"/>
<dbReference type="TopDownProteomics" id="P21291"/>
<dbReference type="Antibodypedia" id="20644">
    <property type="antibodies" value="298 antibodies from 31 providers"/>
</dbReference>
<dbReference type="DNASU" id="1465"/>
<dbReference type="Ensembl" id="ENST00000340006.7">
    <property type="protein sequence ID" value="ENSP00000345079.2"/>
    <property type="gene ID" value="ENSG00000159176.14"/>
</dbReference>
<dbReference type="Ensembl" id="ENST00000367306.5">
    <property type="protein sequence ID" value="ENSP00000356275.1"/>
    <property type="gene ID" value="ENSG00000159176.14"/>
</dbReference>
<dbReference type="Ensembl" id="ENST00000532460.5">
    <property type="protein sequence ID" value="ENSP00000434147.1"/>
    <property type="gene ID" value="ENSG00000159176.14"/>
</dbReference>
<dbReference type="Ensembl" id="ENST00000533432.5">
    <property type="protein sequence ID" value="ENSP00000436792.1"/>
    <property type="gene ID" value="ENSG00000159176.14"/>
</dbReference>
<dbReference type="GeneID" id="1465"/>
<dbReference type="KEGG" id="hsa:1465"/>
<dbReference type="MANE-Select" id="ENST00000340006.7">
    <property type="protein sequence ID" value="ENSP00000345079.2"/>
    <property type="RefSeq nucleotide sequence ID" value="NM_004078.3"/>
    <property type="RefSeq protein sequence ID" value="NP_004069.1"/>
</dbReference>
<dbReference type="UCSC" id="uc001gws.4">
    <property type="organism name" value="human"/>
</dbReference>
<dbReference type="AGR" id="HGNC:2469"/>
<dbReference type="CTD" id="1465"/>
<dbReference type="DisGeNET" id="1465"/>
<dbReference type="GeneCards" id="CSRP1"/>
<dbReference type="HGNC" id="HGNC:2469">
    <property type="gene designation" value="CSRP1"/>
</dbReference>
<dbReference type="HPA" id="ENSG00000159176">
    <property type="expression patterns" value="Tissue enhanced (intestine, seminal vesicle)"/>
</dbReference>
<dbReference type="MIM" id="123876">
    <property type="type" value="gene"/>
</dbReference>
<dbReference type="neXtProt" id="NX_P21291"/>
<dbReference type="OpenTargets" id="ENSG00000159176"/>
<dbReference type="PharmGKB" id="PA26967"/>
<dbReference type="VEuPathDB" id="HostDB:ENSG00000159176"/>
<dbReference type="eggNOG" id="KOG1700">
    <property type="taxonomic scope" value="Eukaryota"/>
</dbReference>
<dbReference type="GeneTree" id="ENSGT00940000156777"/>
<dbReference type="InParanoid" id="P21291"/>
<dbReference type="OMA" id="GICHRCE"/>
<dbReference type="OrthoDB" id="8062037at2759"/>
<dbReference type="PAN-GO" id="P21291">
    <property type="GO annotations" value="7 GO annotations based on evolutionary models"/>
</dbReference>
<dbReference type="PhylomeDB" id="P21291"/>
<dbReference type="TreeFam" id="TF313758"/>
<dbReference type="PathwayCommons" id="P21291"/>
<dbReference type="Reactome" id="R-HSA-5660489">
    <property type="pathway name" value="MTF1 activates gene expression"/>
</dbReference>
<dbReference type="SignaLink" id="P21291"/>
<dbReference type="SIGNOR" id="P21291"/>
<dbReference type="BioGRID-ORCS" id="1465">
    <property type="hits" value="4 hits in 1156 CRISPR screens"/>
</dbReference>
<dbReference type="CD-CODE" id="FB4E32DD">
    <property type="entry name" value="Presynaptic clusters and postsynaptic densities"/>
</dbReference>
<dbReference type="ChiTaRS" id="CSRP1">
    <property type="organism name" value="human"/>
</dbReference>
<dbReference type="GeneWiki" id="CSRP1"/>
<dbReference type="GenomeRNAi" id="1465"/>
<dbReference type="Pharos" id="P21291">
    <property type="development level" value="Tbio"/>
</dbReference>
<dbReference type="PRO" id="PR:P21291"/>
<dbReference type="Proteomes" id="UP000005640">
    <property type="component" value="Chromosome 1"/>
</dbReference>
<dbReference type="RNAct" id="P21291">
    <property type="molecule type" value="protein"/>
</dbReference>
<dbReference type="Bgee" id="ENSG00000159176">
    <property type="expression patterns" value="Expressed in popliteal artery and 205 other cell types or tissues"/>
</dbReference>
<dbReference type="ExpressionAtlas" id="P21291">
    <property type="expression patterns" value="baseline and differential"/>
</dbReference>
<dbReference type="GO" id="GO:0005737">
    <property type="term" value="C:cytoplasm"/>
    <property type="evidence" value="ECO:0000318"/>
    <property type="project" value="GO_Central"/>
</dbReference>
<dbReference type="GO" id="GO:0070062">
    <property type="term" value="C:extracellular exosome"/>
    <property type="evidence" value="ECO:0007005"/>
    <property type="project" value="UniProtKB"/>
</dbReference>
<dbReference type="GO" id="GO:0005925">
    <property type="term" value="C:focal adhesion"/>
    <property type="evidence" value="ECO:0007005"/>
    <property type="project" value="UniProtKB"/>
</dbReference>
<dbReference type="GO" id="GO:0005634">
    <property type="term" value="C:nucleus"/>
    <property type="evidence" value="ECO:0000314"/>
    <property type="project" value="UniProtKB"/>
</dbReference>
<dbReference type="GO" id="GO:0030018">
    <property type="term" value="C:Z disc"/>
    <property type="evidence" value="ECO:0000318"/>
    <property type="project" value="GO_Central"/>
</dbReference>
<dbReference type="GO" id="GO:0042805">
    <property type="term" value="F:actinin binding"/>
    <property type="evidence" value="ECO:0000318"/>
    <property type="project" value="GO_Central"/>
</dbReference>
<dbReference type="GO" id="GO:0003723">
    <property type="term" value="F:RNA binding"/>
    <property type="evidence" value="ECO:0007005"/>
    <property type="project" value="UniProtKB"/>
</dbReference>
<dbReference type="GO" id="GO:0008307">
    <property type="term" value="F:structural constituent of muscle"/>
    <property type="evidence" value="ECO:0000318"/>
    <property type="project" value="GO_Central"/>
</dbReference>
<dbReference type="GO" id="GO:0008270">
    <property type="term" value="F:zinc ion binding"/>
    <property type="evidence" value="ECO:0000304"/>
    <property type="project" value="ProtInc"/>
</dbReference>
<dbReference type="GO" id="GO:0060537">
    <property type="term" value="P:muscle tissue development"/>
    <property type="evidence" value="ECO:0000318"/>
    <property type="project" value="GO_Central"/>
</dbReference>
<dbReference type="GO" id="GO:0070527">
    <property type="term" value="P:platelet aggregation"/>
    <property type="evidence" value="ECO:0007001"/>
    <property type="project" value="UniProtKB"/>
</dbReference>
<dbReference type="GO" id="GO:0045214">
    <property type="term" value="P:sarcomere organization"/>
    <property type="evidence" value="ECO:0000318"/>
    <property type="project" value="GO_Central"/>
</dbReference>
<dbReference type="CDD" id="cd09479">
    <property type="entry name" value="LIM1_CRP1"/>
    <property type="match status" value="1"/>
</dbReference>
<dbReference type="CDD" id="cd09403">
    <property type="entry name" value="LIM2_CRP"/>
    <property type="match status" value="1"/>
</dbReference>
<dbReference type="FunFam" id="2.10.110.10:FF:000001">
    <property type="entry name" value="Cysteine and glycine-rich protein 1"/>
    <property type="match status" value="1"/>
</dbReference>
<dbReference type="FunFam" id="2.10.110.10:FF:000124">
    <property type="entry name" value="Cysteine and glycine-rich protein 1a"/>
    <property type="match status" value="1"/>
</dbReference>
<dbReference type="Gene3D" id="2.10.110.10">
    <property type="entry name" value="Cysteine Rich Protein"/>
    <property type="match status" value="2"/>
</dbReference>
<dbReference type="InterPro" id="IPR001781">
    <property type="entry name" value="Znf_LIM"/>
</dbReference>
<dbReference type="PANTHER" id="PTHR24215:SF23">
    <property type="entry name" value="CYSTEINE AND GLYCINE-RICH PROTEIN 1"/>
    <property type="match status" value="1"/>
</dbReference>
<dbReference type="PANTHER" id="PTHR24215">
    <property type="entry name" value="RHO-GTPASE-ACTIVATING PROTEIN LRG1"/>
    <property type="match status" value="1"/>
</dbReference>
<dbReference type="Pfam" id="PF00412">
    <property type="entry name" value="LIM"/>
    <property type="match status" value="2"/>
</dbReference>
<dbReference type="SMART" id="SM00132">
    <property type="entry name" value="LIM"/>
    <property type="match status" value="2"/>
</dbReference>
<dbReference type="SUPFAM" id="SSF57716">
    <property type="entry name" value="Glucocorticoid receptor-like (DNA-binding domain)"/>
    <property type="match status" value="4"/>
</dbReference>
<dbReference type="PROSITE" id="PS00478">
    <property type="entry name" value="LIM_DOMAIN_1"/>
    <property type="match status" value="2"/>
</dbReference>
<dbReference type="PROSITE" id="PS50023">
    <property type="entry name" value="LIM_DOMAIN_2"/>
    <property type="match status" value="2"/>
</dbReference>
<evidence type="ECO:0000250" key="1">
    <source>
        <dbReference type="UniProtKB" id="P47875"/>
    </source>
</evidence>
<evidence type="ECO:0000250" key="2">
    <source>
        <dbReference type="UniProtKB" id="P97315"/>
    </source>
</evidence>
<evidence type="ECO:0000255" key="3"/>
<evidence type="ECO:0000255" key="4">
    <source>
        <dbReference type="PROSITE-ProRule" id="PRU00125"/>
    </source>
</evidence>
<evidence type="ECO:0000269" key="5">
    <source>
    </source>
</evidence>
<evidence type="ECO:0000305" key="6"/>
<evidence type="ECO:0007744" key="7">
    <source>
    </source>
</evidence>
<evidence type="ECO:0007744" key="8">
    <source>
    </source>
</evidence>
<evidence type="ECO:0007744" key="9">
    <source>
    </source>
</evidence>
<evidence type="ECO:0007744" key="10">
    <source>
    </source>
</evidence>
<evidence type="ECO:0007744" key="11">
    <source>
    </source>
</evidence>
<evidence type="ECO:0007744" key="12">
    <source>
    </source>
</evidence>
<evidence type="ECO:0007744" key="13">
    <source>
    </source>
</evidence>
<evidence type="ECO:0007744" key="14">
    <source>
    </source>
</evidence>
<evidence type="ECO:0007744" key="15">
    <source>
    </source>
</evidence>
<evidence type="ECO:0007744" key="16">
    <source>
    </source>
</evidence>
<proteinExistence type="evidence at protein level"/>
<accession>P21291</accession>
<accession>A8K268</accession>
<accession>Q5U0J2</accession>
<gene>
    <name type="primary">CSRP1</name>
    <name type="synonym">CSRP</name>
    <name type="synonym">CYRP</name>
</gene>